<gene>
    <name evidence="1" type="primary">gmk</name>
    <name type="ordered locus">TM1040_1266</name>
</gene>
<reference key="1">
    <citation type="submission" date="2006-05" db="EMBL/GenBank/DDBJ databases">
        <title>Complete sequence of chromosome of Silicibacter sp. TM1040.</title>
        <authorList>
            <consortium name="US DOE Joint Genome Institute"/>
            <person name="Copeland A."/>
            <person name="Lucas S."/>
            <person name="Lapidus A."/>
            <person name="Barry K."/>
            <person name="Detter J.C."/>
            <person name="Glavina del Rio T."/>
            <person name="Hammon N."/>
            <person name="Israni S."/>
            <person name="Dalin E."/>
            <person name="Tice H."/>
            <person name="Pitluck S."/>
            <person name="Brettin T."/>
            <person name="Bruce D."/>
            <person name="Han C."/>
            <person name="Tapia R."/>
            <person name="Goodwin L."/>
            <person name="Thompson L.S."/>
            <person name="Gilna P."/>
            <person name="Schmutz J."/>
            <person name="Larimer F."/>
            <person name="Land M."/>
            <person name="Hauser L."/>
            <person name="Kyrpides N."/>
            <person name="Kim E."/>
            <person name="Belas R."/>
            <person name="Moran M.A."/>
            <person name="Buchan A."/>
            <person name="Gonzalez J.M."/>
            <person name="Schell M.A."/>
            <person name="Sun F."/>
            <person name="Richardson P."/>
        </authorList>
    </citation>
    <scope>NUCLEOTIDE SEQUENCE [LARGE SCALE GENOMIC DNA]</scope>
    <source>
        <strain>TM1040</strain>
    </source>
</reference>
<keyword id="KW-0067">ATP-binding</keyword>
<keyword id="KW-0963">Cytoplasm</keyword>
<keyword id="KW-0418">Kinase</keyword>
<keyword id="KW-0547">Nucleotide-binding</keyword>
<keyword id="KW-1185">Reference proteome</keyword>
<keyword id="KW-0808">Transferase</keyword>
<comment type="function">
    <text evidence="1">Essential for recycling GMP and indirectly, cGMP.</text>
</comment>
<comment type="catalytic activity">
    <reaction evidence="1">
        <text>GMP + ATP = GDP + ADP</text>
        <dbReference type="Rhea" id="RHEA:20780"/>
        <dbReference type="ChEBI" id="CHEBI:30616"/>
        <dbReference type="ChEBI" id="CHEBI:58115"/>
        <dbReference type="ChEBI" id="CHEBI:58189"/>
        <dbReference type="ChEBI" id="CHEBI:456216"/>
        <dbReference type="EC" id="2.7.4.8"/>
    </reaction>
</comment>
<comment type="subcellular location">
    <subcellularLocation>
        <location evidence="1">Cytoplasm</location>
    </subcellularLocation>
</comment>
<comment type="similarity">
    <text evidence="1">Belongs to the guanylate kinase family.</text>
</comment>
<protein>
    <recommendedName>
        <fullName evidence="1">Guanylate kinase</fullName>
        <ecNumber evidence="1">2.7.4.8</ecNumber>
    </recommendedName>
    <alternativeName>
        <fullName evidence="1">GMP kinase</fullName>
    </alternativeName>
</protein>
<evidence type="ECO:0000255" key="1">
    <source>
        <dbReference type="HAMAP-Rule" id="MF_00328"/>
    </source>
</evidence>
<dbReference type="EC" id="2.7.4.8" evidence="1"/>
<dbReference type="EMBL" id="CP000377">
    <property type="protein sequence ID" value="ABF63999.1"/>
    <property type="molecule type" value="Genomic_DNA"/>
</dbReference>
<dbReference type="RefSeq" id="WP_011538605.1">
    <property type="nucleotide sequence ID" value="NC_008044.1"/>
</dbReference>
<dbReference type="SMR" id="Q1GH67"/>
<dbReference type="STRING" id="292414.TM1040_1266"/>
<dbReference type="KEGG" id="sit:TM1040_1266"/>
<dbReference type="eggNOG" id="COG0194">
    <property type="taxonomic scope" value="Bacteria"/>
</dbReference>
<dbReference type="HOGENOM" id="CLU_001715_1_0_5"/>
<dbReference type="OrthoDB" id="9808150at2"/>
<dbReference type="Proteomes" id="UP000000636">
    <property type="component" value="Chromosome"/>
</dbReference>
<dbReference type="GO" id="GO:0005829">
    <property type="term" value="C:cytosol"/>
    <property type="evidence" value="ECO:0007669"/>
    <property type="project" value="TreeGrafter"/>
</dbReference>
<dbReference type="GO" id="GO:0005524">
    <property type="term" value="F:ATP binding"/>
    <property type="evidence" value="ECO:0007669"/>
    <property type="project" value="UniProtKB-UniRule"/>
</dbReference>
<dbReference type="GO" id="GO:0004385">
    <property type="term" value="F:guanylate kinase activity"/>
    <property type="evidence" value="ECO:0007669"/>
    <property type="project" value="UniProtKB-UniRule"/>
</dbReference>
<dbReference type="CDD" id="cd00071">
    <property type="entry name" value="GMPK"/>
    <property type="match status" value="1"/>
</dbReference>
<dbReference type="FunFam" id="3.30.63.10:FF:000002">
    <property type="entry name" value="Guanylate kinase 1"/>
    <property type="match status" value="1"/>
</dbReference>
<dbReference type="Gene3D" id="3.30.63.10">
    <property type="entry name" value="Guanylate Kinase phosphate binding domain"/>
    <property type="match status" value="1"/>
</dbReference>
<dbReference type="Gene3D" id="3.40.50.300">
    <property type="entry name" value="P-loop containing nucleotide triphosphate hydrolases"/>
    <property type="match status" value="1"/>
</dbReference>
<dbReference type="HAMAP" id="MF_00328">
    <property type="entry name" value="Guanylate_kinase"/>
    <property type="match status" value="1"/>
</dbReference>
<dbReference type="InterPro" id="IPR008145">
    <property type="entry name" value="GK/Ca_channel_bsu"/>
</dbReference>
<dbReference type="InterPro" id="IPR008144">
    <property type="entry name" value="Guanylate_kin-like_dom"/>
</dbReference>
<dbReference type="InterPro" id="IPR017665">
    <property type="entry name" value="Guanylate_kinase"/>
</dbReference>
<dbReference type="InterPro" id="IPR020590">
    <property type="entry name" value="Guanylate_kinase_CS"/>
</dbReference>
<dbReference type="InterPro" id="IPR027417">
    <property type="entry name" value="P-loop_NTPase"/>
</dbReference>
<dbReference type="NCBIfam" id="TIGR03263">
    <property type="entry name" value="guanyl_kin"/>
    <property type="match status" value="1"/>
</dbReference>
<dbReference type="PANTHER" id="PTHR23117:SF13">
    <property type="entry name" value="GUANYLATE KINASE"/>
    <property type="match status" value="1"/>
</dbReference>
<dbReference type="PANTHER" id="PTHR23117">
    <property type="entry name" value="GUANYLATE KINASE-RELATED"/>
    <property type="match status" value="1"/>
</dbReference>
<dbReference type="Pfam" id="PF00625">
    <property type="entry name" value="Guanylate_kin"/>
    <property type="match status" value="1"/>
</dbReference>
<dbReference type="SMART" id="SM00072">
    <property type="entry name" value="GuKc"/>
    <property type="match status" value="1"/>
</dbReference>
<dbReference type="SUPFAM" id="SSF52540">
    <property type="entry name" value="P-loop containing nucleoside triphosphate hydrolases"/>
    <property type="match status" value="1"/>
</dbReference>
<dbReference type="PROSITE" id="PS00856">
    <property type="entry name" value="GUANYLATE_KINASE_1"/>
    <property type="match status" value="1"/>
</dbReference>
<dbReference type="PROSITE" id="PS50052">
    <property type="entry name" value="GUANYLATE_KINASE_2"/>
    <property type="match status" value="1"/>
</dbReference>
<feature type="chain" id="PRO_0000266404" description="Guanylate kinase">
    <location>
        <begin position="1"/>
        <end position="217"/>
    </location>
</feature>
<feature type="domain" description="Guanylate kinase-like" evidence="1">
    <location>
        <begin position="10"/>
        <end position="190"/>
    </location>
</feature>
<feature type="binding site" evidence="1">
    <location>
        <begin position="17"/>
        <end position="24"/>
    </location>
    <ligand>
        <name>ATP</name>
        <dbReference type="ChEBI" id="CHEBI:30616"/>
    </ligand>
</feature>
<sequence>MAHSKAQRRGLLIILSSPSGAGKSTLAKRLRAWDSDISFSVSATTRKPRPGEVDGQDYHFVTVESFKQDVANGDMLEHAHVFGNFYGSPKGPVQTAINEGRDVLFDIDWQGAQQITNSDLGKHTLSIFLLPPSITELRRRLESRGQDDAETISRRMQKSWDEISHWGSYDHVLINEDLDETEEALKTIITATRLRRIQQPSLIEHARALQQEFEDLS</sequence>
<proteinExistence type="inferred from homology"/>
<organism>
    <name type="scientific">Ruegeria sp. (strain TM1040)</name>
    <name type="common">Silicibacter sp.</name>
    <dbReference type="NCBI Taxonomy" id="292414"/>
    <lineage>
        <taxon>Bacteria</taxon>
        <taxon>Pseudomonadati</taxon>
        <taxon>Pseudomonadota</taxon>
        <taxon>Alphaproteobacteria</taxon>
        <taxon>Rhodobacterales</taxon>
        <taxon>Roseobacteraceae</taxon>
        <taxon>Ruegeria</taxon>
    </lineage>
</organism>
<accession>Q1GH67</accession>
<name>KGUA_RUEST</name>